<organism>
    <name type="scientific">Limosilactobacillus fermentum (strain NBRC 3956 / LMG 18251)</name>
    <name type="common">Lactobacillus fermentum</name>
    <dbReference type="NCBI Taxonomy" id="334390"/>
    <lineage>
        <taxon>Bacteria</taxon>
        <taxon>Bacillati</taxon>
        <taxon>Bacillota</taxon>
        <taxon>Bacilli</taxon>
        <taxon>Lactobacillales</taxon>
        <taxon>Lactobacillaceae</taxon>
        <taxon>Limosilactobacillus</taxon>
    </lineage>
</organism>
<evidence type="ECO:0000255" key="1">
    <source>
        <dbReference type="HAMAP-Rule" id="MF_01363"/>
    </source>
</evidence>
<evidence type="ECO:0000305" key="2"/>
<dbReference type="EMBL" id="AP008937">
    <property type="protein sequence ID" value="BAG27605.1"/>
    <property type="molecule type" value="Genomic_DNA"/>
</dbReference>
<dbReference type="RefSeq" id="WP_003683797.1">
    <property type="nucleotide sequence ID" value="NC_010610.1"/>
</dbReference>
<dbReference type="SMR" id="B2GD73"/>
<dbReference type="KEGG" id="lfe:LAF_1269"/>
<dbReference type="eggNOG" id="COG0261">
    <property type="taxonomic scope" value="Bacteria"/>
</dbReference>
<dbReference type="HOGENOM" id="CLU_061463_3_1_9"/>
<dbReference type="Proteomes" id="UP000001697">
    <property type="component" value="Chromosome"/>
</dbReference>
<dbReference type="GO" id="GO:0005737">
    <property type="term" value="C:cytoplasm"/>
    <property type="evidence" value="ECO:0007669"/>
    <property type="project" value="UniProtKB-ARBA"/>
</dbReference>
<dbReference type="GO" id="GO:1990904">
    <property type="term" value="C:ribonucleoprotein complex"/>
    <property type="evidence" value="ECO:0007669"/>
    <property type="project" value="UniProtKB-KW"/>
</dbReference>
<dbReference type="GO" id="GO:0005840">
    <property type="term" value="C:ribosome"/>
    <property type="evidence" value="ECO:0007669"/>
    <property type="project" value="UniProtKB-KW"/>
</dbReference>
<dbReference type="GO" id="GO:0019843">
    <property type="term" value="F:rRNA binding"/>
    <property type="evidence" value="ECO:0007669"/>
    <property type="project" value="UniProtKB-UniRule"/>
</dbReference>
<dbReference type="GO" id="GO:0003735">
    <property type="term" value="F:structural constituent of ribosome"/>
    <property type="evidence" value="ECO:0007669"/>
    <property type="project" value="InterPro"/>
</dbReference>
<dbReference type="GO" id="GO:0006412">
    <property type="term" value="P:translation"/>
    <property type="evidence" value="ECO:0007669"/>
    <property type="project" value="UniProtKB-UniRule"/>
</dbReference>
<dbReference type="HAMAP" id="MF_01363">
    <property type="entry name" value="Ribosomal_bL21"/>
    <property type="match status" value="1"/>
</dbReference>
<dbReference type="InterPro" id="IPR028909">
    <property type="entry name" value="bL21-like"/>
</dbReference>
<dbReference type="InterPro" id="IPR036164">
    <property type="entry name" value="bL21-like_sf"/>
</dbReference>
<dbReference type="InterPro" id="IPR001787">
    <property type="entry name" value="Ribosomal_bL21"/>
</dbReference>
<dbReference type="InterPro" id="IPR018258">
    <property type="entry name" value="Ribosomal_bL21_CS"/>
</dbReference>
<dbReference type="NCBIfam" id="TIGR00061">
    <property type="entry name" value="L21"/>
    <property type="match status" value="1"/>
</dbReference>
<dbReference type="PANTHER" id="PTHR21349">
    <property type="entry name" value="50S RIBOSOMAL PROTEIN L21"/>
    <property type="match status" value="1"/>
</dbReference>
<dbReference type="PANTHER" id="PTHR21349:SF0">
    <property type="entry name" value="LARGE RIBOSOMAL SUBUNIT PROTEIN BL21M"/>
    <property type="match status" value="1"/>
</dbReference>
<dbReference type="Pfam" id="PF00829">
    <property type="entry name" value="Ribosomal_L21p"/>
    <property type="match status" value="1"/>
</dbReference>
<dbReference type="SUPFAM" id="SSF141091">
    <property type="entry name" value="L21p-like"/>
    <property type="match status" value="1"/>
</dbReference>
<dbReference type="PROSITE" id="PS01169">
    <property type="entry name" value="RIBOSOMAL_L21"/>
    <property type="match status" value="1"/>
</dbReference>
<keyword id="KW-1185">Reference proteome</keyword>
<keyword id="KW-0687">Ribonucleoprotein</keyword>
<keyword id="KW-0689">Ribosomal protein</keyword>
<keyword id="KW-0694">RNA-binding</keyword>
<keyword id="KW-0699">rRNA-binding</keyword>
<reference key="1">
    <citation type="journal article" date="2008" name="DNA Res.">
        <title>Comparative genome analysis of Lactobacillus reuteri and Lactobacillus fermentum reveal a genomic island for reuterin and cobalamin production.</title>
        <authorList>
            <person name="Morita H."/>
            <person name="Toh H."/>
            <person name="Fukuda S."/>
            <person name="Horikawa H."/>
            <person name="Oshima K."/>
            <person name="Suzuki T."/>
            <person name="Murakami M."/>
            <person name="Hisamatsu S."/>
            <person name="Kato Y."/>
            <person name="Takizawa T."/>
            <person name="Fukuoka H."/>
            <person name="Yoshimura T."/>
            <person name="Itoh K."/>
            <person name="O'Sullivan D.J."/>
            <person name="McKay L.L."/>
            <person name="Ohno H."/>
            <person name="Kikuchi J."/>
            <person name="Masaoka T."/>
            <person name="Hattori M."/>
        </authorList>
    </citation>
    <scope>NUCLEOTIDE SEQUENCE [LARGE SCALE GENOMIC DNA]</scope>
    <source>
        <strain>NBRC 3956 / LMG 18251</strain>
    </source>
</reference>
<accession>B2GD73</accession>
<name>RL21_LIMF3</name>
<proteinExistence type="inferred from homology"/>
<feature type="chain" id="PRO_1000143813" description="Large ribosomal subunit protein bL21">
    <location>
        <begin position="1"/>
        <end position="102"/>
    </location>
</feature>
<comment type="function">
    <text evidence="1">This protein binds to 23S rRNA in the presence of protein L20.</text>
</comment>
<comment type="subunit">
    <text evidence="1">Part of the 50S ribosomal subunit. Contacts protein L20.</text>
</comment>
<comment type="similarity">
    <text evidence="1">Belongs to the bacterial ribosomal protein bL21 family.</text>
</comment>
<gene>
    <name evidence="1" type="primary">rplU</name>
    <name type="ordered locus">LAF_1269</name>
</gene>
<sequence length="102" mass="11159">MYAIIVTGGKQYKVEAGQAIYVEKLDAQAGDKVTFDKVVFVGGDDTKIGTPFVDGASVEGTVDKQGKEKKVVTFKYKPKKHTHTKQGHRQPYTKVTIDAINA</sequence>
<protein>
    <recommendedName>
        <fullName evidence="1">Large ribosomal subunit protein bL21</fullName>
    </recommendedName>
    <alternativeName>
        <fullName evidence="2">50S ribosomal protein L21</fullName>
    </alternativeName>
</protein>